<evidence type="ECO:0000250" key="1"/>
<evidence type="ECO:0000255" key="2">
    <source>
        <dbReference type="PROSITE-ProRule" id="PRU00649"/>
    </source>
</evidence>
<evidence type="ECO:0000256" key="3">
    <source>
        <dbReference type="SAM" id="MobiDB-lite"/>
    </source>
</evidence>
<evidence type="ECO:0000305" key="4"/>
<name>MED26_DANRE</name>
<gene>
    <name type="primary">med26</name>
    <name type="synonym">crsp7</name>
</gene>
<sequence>MTTASATPQQMRDRLLQAIDSHSNICNMVAVLDVITNLEKYPITKEALEETRLGKLINDVRKKTKDEDLAKRAKKLLRNWQKLIEPGQGDTPVRGPPNVPGSANGGAHPCRTDTPPAVPPPSKVAPELKTRNDIHNTYSPKAEKSSSRKRRAEQRDSPHLPAKMSKTSLYEPVYSSSPPSNGIRGTPEPLLEKDDEVPSDRIRLEHLDNDRHNKIPVNAVKPHPSSPGLTKLPSTSSLLKASVLQQARVDSGGQHQPKSPRYSSSPRSATHETMAKRSTTYAPKGTLSSPSLNSAQVPSPLPTLQPLTSPAQVCISDGPSSVGLEGSLHLHRSSDRVSQPPHSTATLEPLSGALLATHGLEGLETKAEREGASSNSDGKKRKKYRPRDYTVNLQGQSSEDRTKPRLKERRLTFDPVTGQIKPLTPKESHQEEECHGQPIPEPSVRTDIPQQKPPTSVPNPFQQTNWKELSRNEIIQSYLNLQSNVLTSSGAQTHGAHFFMTEYLKREEHDVKEPRKMHVLAPGSSTTELPGVSRDVTNEDLLRIHNEHWPGVNGCYDTKGAWFDWTDCISLDPHGDESKLNILPYVCLD</sequence>
<feature type="chain" id="PRO_0000304960" description="Mediator of RNA polymerase II transcription subunit 26">
    <location>
        <begin position="1"/>
        <end position="589"/>
    </location>
</feature>
<feature type="domain" description="TFIIS N-terminal" evidence="2">
    <location>
        <begin position="10"/>
        <end position="87"/>
    </location>
</feature>
<feature type="region of interest" description="Disordered" evidence="3">
    <location>
        <begin position="83"/>
        <end position="233"/>
    </location>
</feature>
<feature type="region of interest" description="Disordered" evidence="3">
    <location>
        <begin position="247"/>
        <end position="320"/>
    </location>
</feature>
<feature type="region of interest" description="Disordered" evidence="3">
    <location>
        <begin position="363"/>
        <end position="441"/>
    </location>
</feature>
<feature type="compositionally biased region" description="Basic and acidic residues" evidence="3">
    <location>
        <begin position="190"/>
        <end position="213"/>
    </location>
</feature>
<feature type="compositionally biased region" description="Low complexity" evidence="3">
    <location>
        <begin position="259"/>
        <end position="268"/>
    </location>
</feature>
<feature type="compositionally biased region" description="Polar residues" evidence="3">
    <location>
        <begin position="276"/>
        <end position="297"/>
    </location>
</feature>
<feature type="compositionally biased region" description="Basic and acidic residues" evidence="3">
    <location>
        <begin position="398"/>
        <end position="412"/>
    </location>
</feature>
<feature type="compositionally biased region" description="Basic and acidic residues" evidence="3">
    <location>
        <begin position="424"/>
        <end position="435"/>
    </location>
</feature>
<feature type="sequence conflict" description="In Ref. 2; AAH45849." evidence="4" ref="2">
    <original>S</original>
    <variation>G</variation>
    <location>
        <position position="21"/>
    </location>
</feature>
<feature type="sequence conflict" description="In Ref. 1; AAK61395." evidence="4" ref="1">
    <original>K</original>
    <variation>R</variation>
    <location>
        <position position="144"/>
    </location>
</feature>
<feature type="sequence conflict" description="In Ref. 2; AAH45849." evidence="4" ref="2">
    <original>N</original>
    <variation>S</variation>
    <location>
        <position position="472"/>
    </location>
</feature>
<keyword id="KW-0010">Activator</keyword>
<keyword id="KW-0539">Nucleus</keyword>
<keyword id="KW-1185">Reference proteome</keyword>
<keyword id="KW-0804">Transcription</keyword>
<keyword id="KW-0805">Transcription regulation</keyword>
<accession>Q90YL3</accession>
<accession>Q7ZVI4</accession>
<comment type="function">
    <text evidence="1">Component of the Mediator complex, a coactivator involved in the regulated transcription of nearly all RNA polymerase II-dependent genes. Mediator functions as a bridge to convey information from gene-specific regulatory proteins to the basal RNA polymerase II transcription machinery. Mediator is recruited to promoters by direct interactions with regulatory proteins and serves as a scaffold for the assembly of a functional preinitiation complex with RNA polymerase II and the general transcription factors (By similarity).</text>
</comment>
<comment type="subunit">
    <text evidence="1">Component of the Mediator complex.</text>
</comment>
<comment type="subcellular location">
    <subcellularLocation>
        <location evidence="4">Nucleus</location>
    </subcellularLocation>
</comment>
<comment type="similarity">
    <text evidence="4">Belongs to the Mediator complex subunit 26 family.</text>
</comment>
<organism>
    <name type="scientific">Danio rerio</name>
    <name type="common">Zebrafish</name>
    <name type="synonym">Brachydanio rerio</name>
    <dbReference type="NCBI Taxonomy" id="7955"/>
    <lineage>
        <taxon>Eukaryota</taxon>
        <taxon>Metazoa</taxon>
        <taxon>Chordata</taxon>
        <taxon>Craniata</taxon>
        <taxon>Vertebrata</taxon>
        <taxon>Euteleostomi</taxon>
        <taxon>Actinopterygii</taxon>
        <taxon>Neopterygii</taxon>
        <taxon>Teleostei</taxon>
        <taxon>Ostariophysi</taxon>
        <taxon>Cypriniformes</taxon>
        <taxon>Danionidae</taxon>
        <taxon>Danioninae</taxon>
        <taxon>Danio</taxon>
    </lineage>
</organism>
<dbReference type="EMBL" id="AY034615">
    <property type="protein sequence ID" value="AAK61395.1"/>
    <property type="molecule type" value="mRNA"/>
</dbReference>
<dbReference type="EMBL" id="BC045849">
    <property type="protein sequence ID" value="AAH45849.1"/>
    <property type="molecule type" value="mRNA"/>
</dbReference>
<dbReference type="RefSeq" id="NP_998224.1">
    <property type="nucleotide sequence ID" value="NM_213059.1"/>
</dbReference>
<dbReference type="SMR" id="Q90YL3"/>
<dbReference type="FunCoup" id="Q90YL3">
    <property type="interactions" value="1373"/>
</dbReference>
<dbReference type="GeneID" id="406332"/>
<dbReference type="KEGG" id="dre:406332"/>
<dbReference type="AGR" id="ZFIN:ZDB-GENE-040426-2005"/>
<dbReference type="CTD" id="406332"/>
<dbReference type="ZFIN" id="ZDB-GENE-040426-2005">
    <property type="gene designation" value="crsp7"/>
</dbReference>
<dbReference type="InParanoid" id="Q90YL3"/>
<dbReference type="OrthoDB" id="550309at2759"/>
<dbReference type="PhylomeDB" id="Q90YL3"/>
<dbReference type="PRO" id="PR:Q90YL3"/>
<dbReference type="Proteomes" id="UP000000437">
    <property type="component" value="Chromosome 2"/>
</dbReference>
<dbReference type="GO" id="GO:0070847">
    <property type="term" value="C:core mediator complex"/>
    <property type="evidence" value="ECO:0000318"/>
    <property type="project" value="GO_Central"/>
</dbReference>
<dbReference type="GO" id="GO:0016592">
    <property type="term" value="C:mediator complex"/>
    <property type="evidence" value="ECO:0000250"/>
    <property type="project" value="UniProtKB"/>
</dbReference>
<dbReference type="GO" id="GO:0003712">
    <property type="term" value="F:transcription coregulator activity"/>
    <property type="evidence" value="ECO:0000250"/>
    <property type="project" value="UniProtKB"/>
</dbReference>
<dbReference type="GO" id="GO:0010628">
    <property type="term" value="P:positive regulation of gene expression"/>
    <property type="evidence" value="ECO:0000318"/>
    <property type="project" value="GO_Central"/>
</dbReference>
<dbReference type="GO" id="GO:0006357">
    <property type="term" value="P:regulation of transcription by RNA polymerase II"/>
    <property type="evidence" value="ECO:0000250"/>
    <property type="project" value="UniProtKB"/>
</dbReference>
<dbReference type="CDD" id="cd00183">
    <property type="entry name" value="TFIIS_I"/>
    <property type="match status" value="1"/>
</dbReference>
<dbReference type="FunFam" id="1.20.930.10:FF:000008">
    <property type="entry name" value="mediator of RNA polymerase II transcription subunit 26"/>
    <property type="match status" value="1"/>
</dbReference>
<dbReference type="Gene3D" id="1.20.930.10">
    <property type="entry name" value="Conserved domain common to transcription factors TFIIS, elongin A, CRSP70"/>
    <property type="match status" value="1"/>
</dbReference>
<dbReference type="InterPro" id="IPR042376">
    <property type="entry name" value="MED26"/>
</dbReference>
<dbReference type="InterPro" id="IPR031416">
    <property type="entry name" value="Med26_C"/>
</dbReference>
<dbReference type="InterPro" id="IPR031417">
    <property type="entry name" value="Med26_Mid"/>
</dbReference>
<dbReference type="InterPro" id="IPR003617">
    <property type="entry name" value="TFIIS/CRSP70_N_sub"/>
</dbReference>
<dbReference type="InterPro" id="IPR035441">
    <property type="entry name" value="TFIIS/LEDGF_dom_sf"/>
</dbReference>
<dbReference type="InterPro" id="IPR017923">
    <property type="entry name" value="TFIIS_N"/>
</dbReference>
<dbReference type="PANTHER" id="PTHR15201">
    <property type="entry name" value="CRSP70"/>
    <property type="match status" value="1"/>
</dbReference>
<dbReference type="PANTHER" id="PTHR15201:SF1">
    <property type="entry name" value="MEDIATOR OF RNA POLYMERASE II TRANSCRIPTION SUBUNIT 26"/>
    <property type="match status" value="1"/>
</dbReference>
<dbReference type="Pfam" id="PF08711">
    <property type="entry name" value="Med26"/>
    <property type="match status" value="1"/>
</dbReference>
<dbReference type="Pfam" id="PF15693">
    <property type="entry name" value="Med26_C"/>
    <property type="match status" value="1"/>
</dbReference>
<dbReference type="Pfam" id="PF15694">
    <property type="entry name" value="Med26_M"/>
    <property type="match status" value="1"/>
</dbReference>
<dbReference type="SMART" id="SM00509">
    <property type="entry name" value="TFS2N"/>
    <property type="match status" value="1"/>
</dbReference>
<dbReference type="SUPFAM" id="SSF47676">
    <property type="entry name" value="Conserved domain common to transcription factors TFIIS, elongin A, CRSP70"/>
    <property type="match status" value="1"/>
</dbReference>
<dbReference type="PROSITE" id="PS51319">
    <property type="entry name" value="TFIIS_N"/>
    <property type="match status" value="1"/>
</dbReference>
<protein>
    <recommendedName>
        <fullName>Mediator of RNA polymerase II transcription subunit 26</fullName>
    </recommendedName>
    <alternativeName>
        <fullName>Cofactor required for Sp1 transcriptional activation subunit 7</fullName>
        <shortName>CRSP complex subunit 7</shortName>
    </alternativeName>
    <alternativeName>
        <fullName>Mediator complex subunit 26</fullName>
    </alternativeName>
</protein>
<reference key="1">
    <citation type="submission" date="2001-05" db="EMBL/GenBank/DDBJ databases">
        <authorList>
            <person name="Hartmann E."/>
        </authorList>
    </citation>
    <scope>NUCLEOTIDE SEQUENCE [MRNA]</scope>
</reference>
<reference key="2">
    <citation type="submission" date="2003-01" db="EMBL/GenBank/DDBJ databases">
        <authorList>
            <consortium name="NIH - Zebrafish Gene Collection (ZGC) project"/>
        </authorList>
    </citation>
    <scope>NUCLEOTIDE SEQUENCE [LARGE SCALE MRNA]</scope>
    <source>
        <strain>AB</strain>
    </source>
</reference>
<proteinExistence type="evidence at transcript level"/>